<gene>
    <name evidence="1" type="primary">rpmA</name>
    <name evidence="1" type="synonym">rpl27</name>
    <name type="ordered locus">P9215_15741</name>
</gene>
<protein>
    <recommendedName>
        <fullName evidence="1">Large ribosomal subunit protein bL27</fullName>
    </recommendedName>
    <alternativeName>
        <fullName evidence="3">50S ribosomal protein L27</fullName>
    </alternativeName>
</protein>
<name>RL27_PROM2</name>
<evidence type="ECO:0000255" key="1">
    <source>
        <dbReference type="HAMAP-Rule" id="MF_00539"/>
    </source>
</evidence>
<evidence type="ECO:0000256" key="2">
    <source>
        <dbReference type="SAM" id="MobiDB-lite"/>
    </source>
</evidence>
<evidence type="ECO:0000305" key="3"/>
<reference key="1">
    <citation type="journal article" date="2007" name="PLoS Genet.">
        <title>Patterns and implications of gene gain and loss in the evolution of Prochlorococcus.</title>
        <authorList>
            <person name="Kettler G.C."/>
            <person name="Martiny A.C."/>
            <person name="Huang K."/>
            <person name="Zucker J."/>
            <person name="Coleman M.L."/>
            <person name="Rodrigue S."/>
            <person name="Chen F."/>
            <person name="Lapidus A."/>
            <person name="Ferriera S."/>
            <person name="Johnson J."/>
            <person name="Steglich C."/>
            <person name="Church G.M."/>
            <person name="Richardson P."/>
            <person name="Chisholm S.W."/>
        </authorList>
    </citation>
    <scope>NUCLEOTIDE SEQUENCE [LARGE SCALE GENOMIC DNA]</scope>
    <source>
        <strain>MIT 9215</strain>
    </source>
</reference>
<organism>
    <name type="scientific">Prochlorococcus marinus (strain MIT 9215)</name>
    <dbReference type="NCBI Taxonomy" id="93060"/>
    <lineage>
        <taxon>Bacteria</taxon>
        <taxon>Bacillati</taxon>
        <taxon>Cyanobacteriota</taxon>
        <taxon>Cyanophyceae</taxon>
        <taxon>Synechococcales</taxon>
        <taxon>Prochlorococcaceae</taxon>
        <taxon>Prochlorococcus</taxon>
    </lineage>
</organism>
<sequence length="86" mass="9359">MAHKKGTGSTRNGRDSNSKRLGVKAYGGEKVTAGSILIRQRGTSFLPGINVGKGKDDTLFALKEGTVSFESIKRNLRNRKRVNIVI</sequence>
<dbReference type="EMBL" id="CP000825">
    <property type="protein sequence ID" value="ABV51187.1"/>
    <property type="molecule type" value="Genomic_DNA"/>
</dbReference>
<dbReference type="RefSeq" id="WP_011863458.1">
    <property type="nucleotide sequence ID" value="NC_009840.1"/>
</dbReference>
<dbReference type="SMR" id="A8G6F6"/>
<dbReference type="STRING" id="93060.P9215_15741"/>
<dbReference type="KEGG" id="pmh:P9215_15741"/>
<dbReference type="eggNOG" id="COG0211">
    <property type="taxonomic scope" value="Bacteria"/>
</dbReference>
<dbReference type="HOGENOM" id="CLU_095424_4_0_3"/>
<dbReference type="OrthoDB" id="9803474at2"/>
<dbReference type="Proteomes" id="UP000002014">
    <property type="component" value="Chromosome"/>
</dbReference>
<dbReference type="GO" id="GO:0022625">
    <property type="term" value="C:cytosolic large ribosomal subunit"/>
    <property type="evidence" value="ECO:0007669"/>
    <property type="project" value="TreeGrafter"/>
</dbReference>
<dbReference type="GO" id="GO:0003735">
    <property type="term" value="F:structural constituent of ribosome"/>
    <property type="evidence" value="ECO:0007669"/>
    <property type="project" value="InterPro"/>
</dbReference>
<dbReference type="GO" id="GO:0006412">
    <property type="term" value="P:translation"/>
    <property type="evidence" value="ECO:0007669"/>
    <property type="project" value="UniProtKB-UniRule"/>
</dbReference>
<dbReference type="FunFam" id="2.40.50.100:FF:000020">
    <property type="entry name" value="50S ribosomal protein L27"/>
    <property type="match status" value="1"/>
</dbReference>
<dbReference type="Gene3D" id="2.40.50.100">
    <property type="match status" value="1"/>
</dbReference>
<dbReference type="HAMAP" id="MF_00539">
    <property type="entry name" value="Ribosomal_bL27"/>
    <property type="match status" value="1"/>
</dbReference>
<dbReference type="InterPro" id="IPR001684">
    <property type="entry name" value="Ribosomal_bL27"/>
</dbReference>
<dbReference type="InterPro" id="IPR018261">
    <property type="entry name" value="Ribosomal_bL27_CS"/>
</dbReference>
<dbReference type="NCBIfam" id="TIGR00062">
    <property type="entry name" value="L27"/>
    <property type="match status" value="1"/>
</dbReference>
<dbReference type="PANTHER" id="PTHR15893:SF0">
    <property type="entry name" value="LARGE RIBOSOMAL SUBUNIT PROTEIN BL27M"/>
    <property type="match status" value="1"/>
</dbReference>
<dbReference type="PANTHER" id="PTHR15893">
    <property type="entry name" value="RIBOSOMAL PROTEIN L27"/>
    <property type="match status" value="1"/>
</dbReference>
<dbReference type="Pfam" id="PF01016">
    <property type="entry name" value="Ribosomal_L27"/>
    <property type="match status" value="1"/>
</dbReference>
<dbReference type="PRINTS" id="PR00063">
    <property type="entry name" value="RIBOSOMALL27"/>
</dbReference>
<dbReference type="SUPFAM" id="SSF110324">
    <property type="entry name" value="Ribosomal L27 protein-like"/>
    <property type="match status" value="1"/>
</dbReference>
<dbReference type="PROSITE" id="PS00831">
    <property type="entry name" value="RIBOSOMAL_L27"/>
    <property type="match status" value="1"/>
</dbReference>
<comment type="similarity">
    <text evidence="1">Belongs to the bacterial ribosomal protein bL27 family.</text>
</comment>
<accession>A8G6F6</accession>
<keyword id="KW-0687">Ribonucleoprotein</keyword>
<keyword id="KW-0689">Ribosomal protein</keyword>
<proteinExistence type="inferred from homology"/>
<feature type="chain" id="PRO_1000061049" description="Large ribosomal subunit protein bL27">
    <location>
        <begin position="1"/>
        <end position="86"/>
    </location>
</feature>
<feature type="region of interest" description="Disordered" evidence="2">
    <location>
        <begin position="1"/>
        <end position="24"/>
    </location>
</feature>